<accession>Q6NBI4</accession>
<sequence>MAQGHGDAKGTTAHTEAGGGHKAPFPPFQQETFASQLVSLAIAFVALYLIVSKIALPRVGGVIEERQKTIDGDLAAAQKLKGEADDALKAYEAELADARARAQAIGAETREKLNAQAEAERKTLEQRLAAKLADAEKTIATTRTAAMGNVRNIASDAASAIVQQLAGVTPDSKAVDSAVDASLKG</sequence>
<reference key="1">
    <citation type="journal article" date="2004" name="Nat. Biotechnol.">
        <title>Complete genome sequence of the metabolically versatile photosynthetic bacterium Rhodopseudomonas palustris.</title>
        <authorList>
            <person name="Larimer F.W."/>
            <person name="Chain P."/>
            <person name="Hauser L."/>
            <person name="Lamerdin J.E."/>
            <person name="Malfatti S."/>
            <person name="Do L."/>
            <person name="Land M.L."/>
            <person name="Pelletier D.A."/>
            <person name="Beatty J.T."/>
            <person name="Lang A.S."/>
            <person name="Tabita F.R."/>
            <person name="Gibson J.L."/>
            <person name="Hanson T.E."/>
            <person name="Bobst C."/>
            <person name="Torres y Torres J.L."/>
            <person name="Peres C."/>
            <person name="Harrison F.H."/>
            <person name="Gibson J."/>
            <person name="Harwood C.S."/>
        </authorList>
    </citation>
    <scope>NUCLEOTIDE SEQUENCE [LARGE SCALE GENOMIC DNA]</scope>
    <source>
        <strain>ATCC BAA-98 / CGA009</strain>
    </source>
</reference>
<gene>
    <name type="primary">atpF2</name>
    <name type="synonym">atpG</name>
    <name type="ordered locus">RPA0844</name>
</gene>
<name>ATPF2_RHOPA</name>
<dbReference type="EMBL" id="BX572595">
    <property type="protein sequence ID" value="CAE26288.1"/>
    <property type="molecule type" value="Genomic_DNA"/>
</dbReference>
<dbReference type="RefSeq" id="WP_011156596.1">
    <property type="nucleotide sequence ID" value="NZ_CP116810.1"/>
</dbReference>
<dbReference type="SMR" id="Q6NBI4"/>
<dbReference type="STRING" id="258594.RPA0844"/>
<dbReference type="GeneID" id="66891861"/>
<dbReference type="eggNOG" id="COG0711">
    <property type="taxonomic scope" value="Bacteria"/>
</dbReference>
<dbReference type="HOGENOM" id="CLU_079215_1_2_5"/>
<dbReference type="PhylomeDB" id="Q6NBI4"/>
<dbReference type="GO" id="GO:0005886">
    <property type="term" value="C:plasma membrane"/>
    <property type="evidence" value="ECO:0007669"/>
    <property type="project" value="UniProtKB-SubCell"/>
</dbReference>
<dbReference type="GO" id="GO:0045259">
    <property type="term" value="C:proton-transporting ATP synthase complex"/>
    <property type="evidence" value="ECO:0007669"/>
    <property type="project" value="UniProtKB-KW"/>
</dbReference>
<dbReference type="GO" id="GO:0046933">
    <property type="term" value="F:proton-transporting ATP synthase activity, rotational mechanism"/>
    <property type="evidence" value="ECO:0007669"/>
    <property type="project" value="UniProtKB-UniRule"/>
</dbReference>
<dbReference type="GO" id="GO:0046961">
    <property type="term" value="F:proton-transporting ATPase activity, rotational mechanism"/>
    <property type="evidence" value="ECO:0007669"/>
    <property type="project" value="TreeGrafter"/>
</dbReference>
<dbReference type="CDD" id="cd06503">
    <property type="entry name" value="ATP-synt_Fo_b"/>
    <property type="match status" value="1"/>
</dbReference>
<dbReference type="HAMAP" id="MF_01398">
    <property type="entry name" value="ATP_synth_b_bprime"/>
    <property type="match status" value="1"/>
</dbReference>
<dbReference type="InterPro" id="IPR002146">
    <property type="entry name" value="ATP_synth_b/b'su_bac/chlpt"/>
</dbReference>
<dbReference type="InterPro" id="IPR050059">
    <property type="entry name" value="ATP_synthase_B_chain"/>
</dbReference>
<dbReference type="NCBIfam" id="NF006612">
    <property type="entry name" value="PRK09174.1"/>
    <property type="match status" value="1"/>
</dbReference>
<dbReference type="PANTHER" id="PTHR33445:SF1">
    <property type="entry name" value="ATP SYNTHASE SUBUNIT B"/>
    <property type="match status" value="1"/>
</dbReference>
<dbReference type="PANTHER" id="PTHR33445">
    <property type="entry name" value="ATP SYNTHASE SUBUNIT B', CHLOROPLASTIC"/>
    <property type="match status" value="1"/>
</dbReference>
<dbReference type="Pfam" id="PF00430">
    <property type="entry name" value="ATP-synt_B"/>
    <property type="match status" value="1"/>
</dbReference>
<evidence type="ECO:0000250" key="1"/>
<evidence type="ECO:0000255" key="2"/>
<evidence type="ECO:0000256" key="3">
    <source>
        <dbReference type="SAM" id="MobiDB-lite"/>
    </source>
</evidence>
<evidence type="ECO:0000305" key="4"/>
<protein>
    <recommendedName>
        <fullName>ATP synthase subunit b 2</fullName>
    </recommendedName>
    <alternativeName>
        <fullName>ATP synthase F(0) sector subunit b 2</fullName>
    </alternativeName>
    <alternativeName>
        <fullName>ATPase subunit I 2</fullName>
    </alternativeName>
    <alternativeName>
        <fullName>F-type ATPase subunit b 2</fullName>
        <shortName>F-ATPase subunit b 2</shortName>
    </alternativeName>
</protein>
<comment type="function">
    <text evidence="1">F(1)F(0) ATP synthase produces ATP from ADP in the presence of a proton or sodium gradient. F-type ATPases consist of two structural domains, F(1) containing the extramembraneous catalytic core and F(0) containing the membrane proton channel, linked together by a central stalk and a peripheral stalk. During catalysis, ATP synthesis in the catalytic domain of F(1) is coupled via a rotary mechanism of the central stalk subunits to proton translocation (By similarity).</text>
</comment>
<comment type="function">
    <text evidence="1">Component of the F(0) channel, it forms part of the peripheral stalk, linking F(1) to F(0). The b'-subunit is a diverged and duplicated form of b found in plants and photosynthetic bacteria (By similarity).</text>
</comment>
<comment type="subunit">
    <text evidence="1">F-type ATPases have 2 components, F(1) - the catalytic core - and F(0) - the membrane proton channel. F(1) has five subunits: alpha(3), beta(3), gamma(1), delta(1), epsilon(1). F(0) has three main subunits: a(1), b(2) and c(10-14). The alpha and beta chains form an alternating ring which encloses part of the gamma chain. F(1) is attached to F(0) by a central stalk formed by the gamma and epsilon chains, while a peripheral stalk is formed by the delta and b chains (By similarity).</text>
</comment>
<comment type="subcellular location">
    <subcellularLocation>
        <location evidence="1">Cell inner membrane</location>
        <topology evidence="1">Single-pass membrane protein</topology>
    </subcellularLocation>
</comment>
<comment type="similarity">
    <text evidence="4">Belongs to the ATPase B chain family.</text>
</comment>
<keyword id="KW-0066">ATP synthesis</keyword>
<keyword id="KW-0997">Cell inner membrane</keyword>
<keyword id="KW-1003">Cell membrane</keyword>
<keyword id="KW-0138">CF(0)</keyword>
<keyword id="KW-0375">Hydrogen ion transport</keyword>
<keyword id="KW-0406">Ion transport</keyword>
<keyword id="KW-0472">Membrane</keyword>
<keyword id="KW-0812">Transmembrane</keyword>
<keyword id="KW-1133">Transmembrane helix</keyword>
<keyword id="KW-0813">Transport</keyword>
<proteinExistence type="inferred from homology"/>
<organism>
    <name type="scientific">Rhodopseudomonas palustris (strain ATCC BAA-98 / CGA009)</name>
    <dbReference type="NCBI Taxonomy" id="258594"/>
    <lineage>
        <taxon>Bacteria</taxon>
        <taxon>Pseudomonadati</taxon>
        <taxon>Pseudomonadota</taxon>
        <taxon>Alphaproteobacteria</taxon>
        <taxon>Hyphomicrobiales</taxon>
        <taxon>Nitrobacteraceae</taxon>
        <taxon>Rhodopseudomonas</taxon>
    </lineage>
</organism>
<feature type="chain" id="PRO_0000369039" description="ATP synthase subunit b 2">
    <location>
        <begin position="1"/>
        <end position="185"/>
    </location>
</feature>
<feature type="transmembrane region" description="Helical" evidence="2">
    <location>
        <begin position="37"/>
        <end position="57"/>
    </location>
</feature>
<feature type="region of interest" description="Disordered" evidence="3">
    <location>
        <begin position="1"/>
        <end position="26"/>
    </location>
</feature>